<proteinExistence type="inferred from homology"/>
<evidence type="ECO:0000255" key="1">
    <source>
        <dbReference type="HAMAP-Rule" id="MF_00674"/>
    </source>
</evidence>
<reference key="1">
    <citation type="journal article" date="2007" name="PLoS ONE">
        <title>Analysis of the neurotoxin complex genes in Clostridium botulinum A1-A4 and B1 strains: BoNT/A3, /Ba4 and /B1 clusters are located within plasmids.</title>
        <authorList>
            <person name="Smith T.J."/>
            <person name="Hill K.K."/>
            <person name="Foley B.T."/>
            <person name="Detter J.C."/>
            <person name="Munk A.C."/>
            <person name="Bruce D.C."/>
            <person name="Doggett N.A."/>
            <person name="Smith L.A."/>
            <person name="Marks J.D."/>
            <person name="Xie G."/>
            <person name="Brettin T.S."/>
        </authorList>
    </citation>
    <scope>NUCLEOTIDE SEQUENCE [LARGE SCALE GENOMIC DNA]</scope>
    <source>
        <strain>Okra / Type B1</strain>
    </source>
</reference>
<dbReference type="EMBL" id="CP000939">
    <property type="protein sequence ID" value="ACA44317.1"/>
    <property type="molecule type" value="Genomic_DNA"/>
</dbReference>
<dbReference type="RefSeq" id="WP_003404347.1">
    <property type="nucleotide sequence ID" value="NC_010516.1"/>
</dbReference>
<dbReference type="KEGG" id="cbb:CLD_3165"/>
<dbReference type="HOGENOM" id="CLU_094511_0_1_9"/>
<dbReference type="Proteomes" id="UP000008541">
    <property type="component" value="Chromosome"/>
</dbReference>
<dbReference type="HAMAP" id="MF_00674">
    <property type="entry name" value="UPF0251"/>
    <property type="match status" value="1"/>
</dbReference>
<dbReference type="InterPro" id="IPR013324">
    <property type="entry name" value="RNA_pol_sigma_r3/r4-like"/>
</dbReference>
<dbReference type="InterPro" id="IPR002852">
    <property type="entry name" value="UPF0251"/>
</dbReference>
<dbReference type="PANTHER" id="PTHR37478">
    <property type="match status" value="1"/>
</dbReference>
<dbReference type="PANTHER" id="PTHR37478:SF2">
    <property type="entry name" value="UPF0251 PROTEIN TK0562"/>
    <property type="match status" value="1"/>
</dbReference>
<dbReference type="Pfam" id="PF02001">
    <property type="entry name" value="DUF134"/>
    <property type="match status" value="1"/>
</dbReference>
<dbReference type="SUPFAM" id="SSF88659">
    <property type="entry name" value="Sigma3 and sigma4 domains of RNA polymerase sigma factors"/>
    <property type="match status" value="1"/>
</dbReference>
<gene>
    <name type="ordered locus">CLD_3165</name>
</gene>
<name>Y3165_CLOBK</name>
<accession>B1IKA6</accession>
<feature type="chain" id="PRO_1000131577" description="UPF0251 protein CLD_3165">
    <location>
        <begin position="1"/>
        <end position="157"/>
    </location>
</feature>
<organism>
    <name type="scientific">Clostridium botulinum (strain Okra / Type B1)</name>
    <dbReference type="NCBI Taxonomy" id="498213"/>
    <lineage>
        <taxon>Bacteria</taxon>
        <taxon>Bacillati</taxon>
        <taxon>Bacillota</taxon>
        <taxon>Clostridia</taxon>
        <taxon>Eubacteriales</taxon>
        <taxon>Clostridiaceae</taxon>
        <taxon>Clostridium</taxon>
    </lineage>
</organism>
<sequence length="157" mass="18568">MPRPTKFRRVEFFPENNYFVPWGKPKCEIHEVVLKVEELEAMRLKDIEELNQEQCAEKMEISRQTFQNIIDSARKKVAIALTEGNAIKISGGHYTTKLCKLKCIDCEEIYEINYEQDRHLCPNCGSEKVICNKKADFCRRWCKGQNRKEQYEESKNK</sequence>
<protein>
    <recommendedName>
        <fullName evidence="1">UPF0251 protein CLD_3165</fullName>
    </recommendedName>
</protein>
<comment type="similarity">
    <text evidence="1">Belongs to the UPF0251 family.</text>
</comment>